<dbReference type="EMBL" id="AK145868">
    <property type="protein sequence ID" value="BAE26710.1"/>
    <property type="molecule type" value="mRNA"/>
</dbReference>
<dbReference type="EMBL" id="CT025556">
    <property type="status" value="NOT_ANNOTATED_CDS"/>
    <property type="molecule type" value="Genomic_DNA"/>
</dbReference>
<dbReference type="CCDS" id="CCDS36734.1"/>
<dbReference type="RefSeq" id="NP_620403.2">
    <property type="nucleotide sequence ID" value="NM_138953.2"/>
</dbReference>
<dbReference type="SMR" id="Q3UKU1"/>
<dbReference type="FunCoup" id="Q3UKU1">
    <property type="interactions" value="2125"/>
</dbReference>
<dbReference type="IntAct" id="Q3UKU1">
    <property type="interactions" value="1"/>
</dbReference>
<dbReference type="STRING" id="10090.ENSMUSP00000001583"/>
<dbReference type="iPTMnet" id="Q3UKU1"/>
<dbReference type="PhosphoSitePlus" id="Q3UKU1"/>
<dbReference type="PaxDb" id="10090-ENSMUSP00000001583"/>
<dbReference type="ProteomicsDB" id="275525"/>
<dbReference type="Antibodypedia" id="13079">
    <property type="antibodies" value="175 antibodies from 30 providers"/>
</dbReference>
<dbReference type="DNASU" id="192657"/>
<dbReference type="Ensembl" id="ENSMUST00000001583.8">
    <property type="protein sequence ID" value="ENSMUSP00000001583.7"/>
    <property type="gene ID" value="ENSMUSG00000001542.8"/>
</dbReference>
<dbReference type="GeneID" id="192657"/>
<dbReference type="KEGG" id="mmu:192657"/>
<dbReference type="UCSC" id="uc007rfu.1">
    <property type="organism name" value="mouse"/>
</dbReference>
<dbReference type="AGR" id="MGI:2183438"/>
<dbReference type="CTD" id="22936"/>
<dbReference type="MGI" id="MGI:2183438">
    <property type="gene designation" value="Ell2"/>
</dbReference>
<dbReference type="VEuPathDB" id="HostDB:ENSMUSG00000001542"/>
<dbReference type="eggNOG" id="KOG4796">
    <property type="taxonomic scope" value="Eukaryota"/>
</dbReference>
<dbReference type="GeneTree" id="ENSGT00940000154828"/>
<dbReference type="HOGENOM" id="CLU_021268_0_0_1"/>
<dbReference type="InParanoid" id="Q3UKU1"/>
<dbReference type="OMA" id="PNYYEEK"/>
<dbReference type="OrthoDB" id="6284217at2759"/>
<dbReference type="PhylomeDB" id="Q3UKU1"/>
<dbReference type="TreeFam" id="TF326161"/>
<dbReference type="Reactome" id="R-MMU-6807505">
    <property type="pathway name" value="RNA polymerase II transcribes snRNA genes"/>
</dbReference>
<dbReference type="BioGRID-ORCS" id="192657">
    <property type="hits" value="5 hits in 78 CRISPR screens"/>
</dbReference>
<dbReference type="ChiTaRS" id="Ell2">
    <property type="organism name" value="mouse"/>
</dbReference>
<dbReference type="PRO" id="PR:Q3UKU1"/>
<dbReference type="Proteomes" id="UP000000589">
    <property type="component" value="Chromosome 13"/>
</dbReference>
<dbReference type="RNAct" id="Q3UKU1">
    <property type="molecule type" value="protein"/>
</dbReference>
<dbReference type="Bgee" id="ENSMUSG00000001542">
    <property type="expression patterns" value="Expressed in seminal vesicle and 261 other cell types or tissues"/>
</dbReference>
<dbReference type="ExpressionAtlas" id="Q3UKU1">
    <property type="expression patterns" value="baseline and differential"/>
</dbReference>
<dbReference type="GO" id="GO:0008023">
    <property type="term" value="C:transcription elongation factor complex"/>
    <property type="evidence" value="ECO:0000250"/>
    <property type="project" value="UniProtKB"/>
</dbReference>
<dbReference type="GO" id="GO:0032968">
    <property type="term" value="P:positive regulation of transcription elongation by RNA polymerase II"/>
    <property type="evidence" value="ECO:0000266"/>
    <property type="project" value="MGI"/>
</dbReference>
<dbReference type="GO" id="GO:0042795">
    <property type="term" value="P:snRNA transcription by RNA polymerase II"/>
    <property type="evidence" value="ECO:0000250"/>
    <property type="project" value="UniProtKB"/>
</dbReference>
<dbReference type="GO" id="GO:0006368">
    <property type="term" value="P:transcription elongation by RNA polymerase II"/>
    <property type="evidence" value="ECO:0000266"/>
    <property type="project" value="MGI"/>
</dbReference>
<dbReference type="FunFam" id="1.10.10.2670:FF:000002">
    <property type="entry name" value="RNA polymerase II elongation factor ELL2"/>
    <property type="match status" value="1"/>
</dbReference>
<dbReference type="Gene3D" id="6.10.140.340">
    <property type="match status" value="1"/>
</dbReference>
<dbReference type="Gene3D" id="1.10.10.2670">
    <property type="entry name" value="E3 ubiquitin-protein ligase"/>
    <property type="match status" value="1"/>
</dbReference>
<dbReference type="InterPro" id="IPR042065">
    <property type="entry name" value="E3_ELL-like"/>
</dbReference>
<dbReference type="InterPro" id="IPR031176">
    <property type="entry name" value="ELL/occludin"/>
</dbReference>
<dbReference type="InterPro" id="IPR019464">
    <property type="entry name" value="ELL_N"/>
</dbReference>
<dbReference type="InterPro" id="IPR010844">
    <property type="entry name" value="Occludin_ELL"/>
</dbReference>
<dbReference type="InterPro" id="IPR036390">
    <property type="entry name" value="WH_DNA-bd_sf"/>
</dbReference>
<dbReference type="PANTHER" id="PTHR23288">
    <property type="entry name" value="OCCLUDIN AND RNA POLYMERASE II ELONGATION FACTOR ELL"/>
    <property type="match status" value="1"/>
</dbReference>
<dbReference type="PANTHER" id="PTHR23288:SF8">
    <property type="entry name" value="RNA POLYMERASE II ELONGATION FACTOR ELL2"/>
    <property type="match status" value="1"/>
</dbReference>
<dbReference type="Pfam" id="PF10390">
    <property type="entry name" value="ELL"/>
    <property type="match status" value="1"/>
</dbReference>
<dbReference type="Pfam" id="PF07303">
    <property type="entry name" value="Occludin_ELL"/>
    <property type="match status" value="1"/>
</dbReference>
<dbReference type="SUPFAM" id="SSF144292">
    <property type="entry name" value="occludin/ELL-like"/>
    <property type="match status" value="1"/>
</dbReference>
<dbReference type="SUPFAM" id="SSF46785">
    <property type="entry name" value="Winged helix' DNA-binding domain"/>
    <property type="match status" value="1"/>
</dbReference>
<dbReference type="PROSITE" id="PS51980">
    <property type="entry name" value="OCEL"/>
    <property type="match status" value="1"/>
</dbReference>
<keyword id="KW-0539">Nucleus</keyword>
<keyword id="KW-0597">Phosphoprotein</keyword>
<keyword id="KW-1185">Reference proteome</keyword>
<keyword id="KW-0804">Transcription</keyword>
<keyword id="KW-0805">Transcription regulation</keyword>
<keyword id="KW-0832">Ubl conjugation</keyword>
<comment type="function">
    <text evidence="1 5 6">Elongation factor component of the super elongation complex (SEC), a complex required to increase the catalytic rate of RNA polymerase II transcription by suppressing transient pausing by the polymerase at multiple sites along the DNA. Component of the little elongation complex (LEC), a complex required to regulate small nuclear RNA (snRNA) gene transcription by RNA polymerase II and III (By similarity). Plays a role in immunoglobulin secretion in plasma cells: directs efficient alternative mRNA processing, influencing both proximal poly(A) site choice and exon skipping, as well as immunoglobulin heavy chain (IgH) alternative processing. Probably acts by regulating histone modifications accompanying transition from membrane-specific to secretory IgH mRNA expression.</text>
</comment>
<comment type="subunit">
    <text evidence="1">Component of the super elongation complex (SEC), at least composed of EAF1, EAF2, CDK9, MLLT3/AF9, AFF (AFF1 or AFF4), the P-TEFb complex and ELL (ELL, ELL2 or ELL3). Component of the little elongation complex (LEC), at least composed of ELL (ELL, ELL2 or ELL3), ZC3H8, ICE1 and ICE2. Interacts with AFF4; the interaction is direct and leads to stabilize ELL2 and prevent ELL2 ubiquitination. Interacts with EAF1 and EAF2 (By similarity).</text>
</comment>
<comment type="subcellular location">
    <subcellularLocation>
        <location evidence="1">Nucleus</location>
    </subcellularLocation>
</comment>
<comment type="PTM">
    <text evidence="1">Ubiquitinated by SIAH1, leading to its degradation by the proteasome. Interaction with AFF4 stabilizes ELL2 and prevents ELL2 ubiquitination (By similarity).</text>
</comment>
<comment type="similarity">
    <text evidence="7">Belongs to the ELL/occludin family.</text>
</comment>
<proteinExistence type="evidence at protein level"/>
<protein>
    <recommendedName>
        <fullName>RNA polymerase II elongation factor ELL2</fullName>
    </recommendedName>
</protein>
<sequence length="639" mass="72125">MAAGGAAGLREEQRYGLACGRLGQDNITVLHVKLTETAIRALETYQSHKNLIPFRPSIQFQGLQGLMKIPKNDPFNEVQNFNFYLSNVGRDNPQGSFDCIQQTLSSSGASQLNCLGFIQDKITVCATNDSYQMTRERMTQAEEESRNRSTKVIKPGGPYVGKRVQIRKAPQAISDTVPERKRSTPMNPANTIRKMHSGNSVSQRPYRDRVIHLLALKAYKKPELLARLQKDGVNQKDKNSLGAILQQVANLNPKDLSYTLKDYVFKELQRDWPGYSETDRQTLDLVLSRKLNPSQNASTSRSESPLCSSKDAASSPQKRPLDSDFIDPLMNKKARISHLTNRVPPTLNGYLNPTSEKSCAGLLPPPAAAAIPTLSPLPSTHLPVSNPPQTVNSNSNSPSTPEGLGTQDLPVDSFSQNGSIFEDQQEKYTSRTCLETLPPSSALLKCPKPMEEEHPVSHKKSKKKSKKHKEKDQIKKLDIETMEEKEEDLQREETAKLSNASPNPNEGVKEGCTASMEPSSALELPDYLIKYIAIVSYEQRQNYKDDFNAEYDEYRALHARMETVARRFIKLDAQRKRLSPGSKEYQNVHEEVLQEYQKIKQSSPNYHEEKYRCEYLHNKLAHIKRLIGEFDQQQAESWH</sequence>
<evidence type="ECO:0000250" key="1"/>
<evidence type="ECO:0000250" key="2">
    <source>
        <dbReference type="UniProtKB" id="O00472"/>
    </source>
</evidence>
<evidence type="ECO:0000255" key="3">
    <source>
        <dbReference type="PROSITE-ProRule" id="PRU01324"/>
    </source>
</evidence>
<evidence type="ECO:0000256" key="4">
    <source>
        <dbReference type="SAM" id="MobiDB-lite"/>
    </source>
</evidence>
<evidence type="ECO:0000269" key="5">
    <source>
    </source>
</evidence>
<evidence type="ECO:0000269" key="6">
    <source>
    </source>
</evidence>
<evidence type="ECO:0000305" key="7"/>
<evidence type="ECO:0007744" key="8">
    <source>
    </source>
</evidence>
<organism>
    <name type="scientific">Mus musculus</name>
    <name type="common">Mouse</name>
    <dbReference type="NCBI Taxonomy" id="10090"/>
    <lineage>
        <taxon>Eukaryota</taxon>
        <taxon>Metazoa</taxon>
        <taxon>Chordata</taxon>
        <taxon>Craniata</taxon>
        <taxon>Vertebrata</taxon>
        <taxon>Euteleostomi</taxon>
        <taxon>Mammalia</taxon>
        <taxon>Eutheria</taxon>
        <taxon>Euarchontoglires</taxon>
        <taxon>Glires</taxon>
        <taxon>Rodentia</taxon>
        <taxon>Myomorpha</taxon>
        <taxon>Muroidea</taxon>
        <taxon>Muridae</taxon>
        <taxon>Murinae</taxon>
        <taxon>Mus</taxon>
        <taxon>Mus</taxon>
    </lineage>
</organism>
<feature type="chain" id="PRO_0000322974" description="RNA polymerase II elongation factor ELL2">
    <location>
        <begin position="1"/>
        <end position="639"/>
    </location>
</feature>
<feature type="domain" description="OCEL" evidence="3">
    <location>
        <begin position="525"/>
        <end position="635"/>
    </location>
</feature>
<feature type="region of interest" description="Disordered" evidence="4">
    <location>
        <begin position="175"/>
        <end position="203"/>
    </location>
</feature>
<feature type="region of interest" description="Disordered" evidence="4">
    <location>
        <begin position="291"/>
        <end position="326"/>
    </location>
</feature>
<feature type="region of interest" description="Disordered" evidence="4">
    <location>
        <begin position="378"/>
        <end position="416"/>
    </location>
</feature>
<feature type="region of interest" description="Disordered" evidence="4">
    <location>
        <begin position="439"/>
        <end position="513"/>
    </location>
</feature>
<feature type="compositionally biased region" description="Polar residues" evidence="4">
    <location>
        <begin position="291"/>
        <end position="317"/>
    </location>
</feature>
<feature type="compositionally biased region" description="Low complexity" evidence="4">
    <location>
        <begin position="378"/>
        <end position="401"/>
    </location>
</feature>
<feature type="compositionally biased region" description="Basic residues" evidence="4">
    <location>
        <begin position="457"/>
        <end position="469"/>
    </location>
</feature>
<feature type="compositionally biased region" description="Basic and acidic residues" evidence="4">
    <location>
        <begin position="470"/>
        <end position="479"/>
    </location>
</feature>
<feature type="compositionally biased region" description="Acidic residues" evidence="4">
    <location>
        <begin position="480"/>
        <end position="490"/>
    </location>
</feature>
<feature type="modified residue" description="Phosphoserine" evidence="8">
    <location>
        <position position="501"/>
    </location>
</feature>
<feature type="modified residue" description="Phosphoserine" evidence="2">
    <location>
        <position position="579"/>
    </location>
</feature>
<feature type="sequence conflict" description="In Ref. 1; BAE26710." evidence="7" ref="1">
    <original>V</original>
    <variation>E</variation>
    <location>
        <position position="286"/>
    </location>
</feature>
<reference key="1">
    <citation type="journal article" date="2005" name="Science">
        <title>The transcriptional landscape of the mammalian genome.</title>
        <authorList>
            <person name="Carninci P."/>
            <person name="Kasukawa T."/>
            <person name="Katayama S."/>
            <person name="Gough J."/>
            <person name="Frith M.C."/>
            <person name="Maeda N."/>
            <person name="Oyama R."/>
            <person name="Ravasi T."/>
            <person name="Lenhard B."/>
            <person name="Wells C."/>
            <person name="Kodzius R."/>
            <person name="Shimokawa K."/>
            <person name="Bajic V.B."/>
            <person name="Brenner S.E."/>
            <person name="Batalov S."/>
            <person name="Forrest A.R."/>
            <person name="Zavolan M."/>
            <person name="Davis M.J."/>
            <person name="Wilming L.G."/>
            <person name="Aidinis V."/>
            <person name="Allen J.E."/>
            <person name="Ambesi-Impiombato A."/>
            <person name="Apweiler R."/>
            <person name="Aturaliya R.N."/>
            <person name="Bailey T.L."/>
            <person name="Bansal M."/>
            <person name="Baxter L."/>
            <person name="Beisel K.W."/>
            <person name="Bersano T."/>
            <person name="Bono H."/>
            <person name="Chalk A.M."/>
            <person name="Chiu K.P."/>
            <person name="Choudhary V."/>
            <person name="Christoffels A."/>
            <person name="Clutterbuck D.R."/>
            <person name="Crowe M.L."/>
            <person name="Dalla E."/>
            <person name="Dalrymple B.P."/>
            <person name="de Bono B."/>
            <person name="Della Gatta G."/>
            <person name="di Bernardo D."/>
            <person name="Down T."/>
            <person name="Engstrom P."/>
            <person name="Fagiolini M."/>
            <person name="Faulkner G."/>
            <person name="Fletcher C.F."/>
            <person name="Fukushima T."/>
            <person name="Furuno M."/>
            <person name="Futaki S."/>
            <person name="Gariboldi M."/>
            <person name="Georgii-Hemming P."/>
            <person name="Gingeras T.R."/>
            <person name="Gojobori T."/>
            <person name="Green R.E."/>
            <person name="Gustincich S."/>
            <person name="Harbers M."/>
            <person name="Hayashi Y."/>
            <person name="Hensch T.K."/>
            <person name="Hirokawa N."/>
            <person name="Hill D."/>
            <person name="Huminiecki L."/>
            <person name="Iacono M."/>
            <person name="Ikeo K."/>
            <person name="Iwama A."/>
            <person name="Ishikawa T."/>
            <person name="Jakt M."/>
            <person name="Kanapin A."/>
            <person name="Katoh M."/>
            <person name="Kawasawa Y."/>
            <person name="Kelso J."/>
            <person name="Kitamura H."/>
            <person name="Kitano H."/>
            <person name="Kollias G."/>
            <person name="Krishnan S.P."/>
            <person name="Kruger A."/>
            <person name="Kummerfeld S.K."/>
            <person name="Kurochkin I.V."/>
            <person name="Lareau L.F."/>
            <person name="Lazarevic D."/>
            <person name="Lipovich L."/>
            <person name="Liu J."/>
            <person name="Liuni S."/>
            <person name="McWilliam S."/>
            <person name="Madan Babu M."/>
            <person name="Madera M."/>
            <person name="Marchionni L."/>
            <person name="Matsuda H."/>
            <person name="Matsuzawa S."/>
            <person name="Miki H."/>
            <person name="Mignone F."/>
            <person name="Miyake S."/>
            <person name="Morris K."/>
            <person name="Mottagui-Tabar S."/>
            <person name="Mulder N."/>
            <person name="Nakano N."/>
            <person name="Nakauchi H."/>
            <person name="Ng P."/>
            <person name="Nilsson R."/>
            <person name="Nishiguchi S."/>
            <person name="Nishikawa S."/>
            <person name="Nori F."/>
            <person name="Ohara O."/>
            <person name="Okazaki Y."/>
            <person name="Orlando V."/>
            <person name="Pang K.C."/>
            <person name="Pavan W.J."/>
            <person name="Pavesi G."/>
            <person name="Pesole G."/>
            <person name="Petrovsky N."/>
            <person name="Piazza S."/>
            <person name="Reed J."/>
            <person name="Reid J.F."/>
            <person name="Ring B.Z."/>
            <person name="Ringwald M."/>
            <person name="Rost B."/>
            <person name="Ruan Y."/>
            <person name="Salzberg S.L."/>
            <person name="Sandelin A."/>
            <person name="Schneider C."/>
            <person name="Schoenbach C."/>
            <person name="Sekiguchi K."/>
            <person name="Semple C.A."/>
            <person name="Seno S."/>
            <person name="Sessa L."/>
            <person name="Sheng Y."/>
            <person name="Shibata Y."/>
            <person name="Shimada H."/>
            <person name="Shimada K."/>
            <person name="Silva D."/>
            <person name="Sinclair B."/>
            <person name="Sperling S."/>
            <person name="Stupka E."/>
            <person name="Sugiura K."/>
            <person name="Sultana R."/>
            <person name="Takenaka Y."/>
            <person name="Taki K."/>
            <person name="Tammoja K."/>
            <person name="Tan S.L."/>
            <person name="Tang S."/>
            <person name="Taylor M.S."/>
            <person name="Tegner J."/>
            <person name="Teichmann S.A."/>
            <person name="Ueda H.R."/>
            <person name="van Nimwegen E."/>
            <person name="Verardo R."/>
            <person name="Wei C.L."/>
            <person name="Yagi K."/>
            <person name="Yamanishi H."/>
            <person name="Zabarovsky E."/>
            <person name="Zhu S."/>
            <person name="Zimmer A."/>
            <person name="Hide W."/>
            <person name="Bult C."/>
            <person name="Grimmond S.M."/>
            <person name="Teasdale R.D."/>
            <person name="Liu E.T."/>
            <person name="Brusic V."/>
            <person name="Quackenbush J."/>
            <person name="Wahlestedt C."/>
            <person name="Mattick J.S."/>
            <person name="Hume D.A."/>
            <person name="Kai C."/>
            <person name="Sasaki D."/>
            <person name="Tomaru Y."/>
            <person name="Fukuda S."/>
            <person name="Kanamori-Katayama M."/>
            <person name="Suzuki M."/>
            <person name="Aoki J."/>
            <person name="Arakawa T."/>
            <person name="Iida J."/>
            <person name="Imamura K."/>
            <person name="Itoh M."/>
            <person name="Kato T."/>
            <person name="Kawaji H."/>
            <person name="Kawagashira N."/>
            <person name="Kawashima T."/>
            <person name="Kojima M."/>
            <person name="Kondo S."/>
            <person name="Konno H."/>
            <person name="Nakano K."/>
            <person name="Ninomiya N."/>
            <person name="Nishio T."/>
            <person name="Okada M."/>
            <person name="Plessy C."/>
            <person name="Shibata K."/>
            <person name="Shiraki T."/>
            <person name="Suzuki S."/>
            <person name="Tagami M."/>
            <person name="Waki K."/>
            <person name="Watahiki A."/>
            <person name="Okamura-Oho Y."/>
            <person name="Suzuki H."/>
            <person name="Kawai J."/>
            <person name="Hayashizaki Y."/>
        </authorList>
    </citation>
    <scope>NUCLEOTIDE SEQUENCE [LARGE SCALE MRNA]</scope>
    <source>
        <strain>C57BL/6J</strain>
        <tissue>Placenta</tissue>
    </source>
</reference>
<reference key="2">
    <citation type="journal article" date="2009" name="PLoS Biol.">
        <title>Lineage-specific biology revealed by a finished genome assembly of the mouse.</title>
        <authorList>
            <person name="Church D.M."/>
            <person name="Goodstadt L."/>
            <person name="Hillier L.W."/>
            <person name="Zody M.C."/>
            <person name="Goldstein S."/>
            <person name="She X."/>
            <person name="Bult C.J."/>
            <person name="Agarwala R."/>
            <person name="Cherry J.L."/>
            <person name="DiCuccio M."/>
            <person name="Hlavina W."/>
            <person name="Kapustin Y."/>
            <person name="Meric P."/>
            <person name="Maglott D."/>
            <person name="Birtle Z."/>
            <person name="Marques A.C."/>
            <person name="Graves T."/>
            <person name="Zhou S."/>
            <person name="Teague B."/>
            <person name="Potamousis K."/>
            <person name="Churas C."/>
            <person name="Place M."/>
            <person name="Herschleb J."/>
            <person name="Runnheim R."/>
            <person name="Forrest D."/>
            <person name="Amos-Landgraf J."/>
            <person name="Schwartz D.C."/>
            <person name="Cheng Z."/>
            <person name="Lindblad-Toh K."/>
            <person name="Eichler E.E."/>
            <person name="Ponting C.P."/>
        </authorList>
    </citation>
    <scope>NUCLEOTIDE SEQUENCE [LARGE SCALE GENOMIC DNA]</scope>
    <source>
        <strain>C57BL/6J</strain>
    </source>
</reference>
<reference key="3">
    <citation type="journal article" date="2009" name="Nat. Immunol.">
        <title>Transcription elongation factor ELL2 directs immunoglobulin secretion in plasma cells by stimulating altered RNA processing.</title>
        <authorList>
            <person name="Martincic K."/>
            <person name="Alkan S.A."/>
            <person name="Cheatle A."/>
            <person name="Borghesi L."/>
            <person name="Milcarek C."/>
        </authorList>
    </citation>
    <scope>FUNCTION</scope>
</reference>
<reference key="4">
    <citation type="journal article" date="2010" name="Cell">
        <title>A tissue-specific atlas of mouse protein phosphorylation and expression.</title>
        <authorList>
            <person name="Huttlin E.L."/>
            <person name="Jedrychowski M.P."/>
            <person name="Elias J.E."/>
            <person name="Goswami T."/>
            <person name="Rad R."/>
            <person name="Beausoleil S.A."/>
            <person name="Villen J."/>
            <person name="Haas W."/>
            <person name="Sowa M.E."/>
            <person name="Gygi S.P."/>
        </authorList>
    </citation>
    <scope>PHOSPHORYLATION [LARGE SCALE ANALYSIS] AT SER-501</scope>
    <scope>IDENTIFICATION BY MASS SPECTROMETRY [LARGE SCALE ANALYSIS]</scope>
    <source>
        <tissue>Kidney</tissue>
        <tissue>Spleen</tissue>
        <tissue>Testis</tissue>
    </source>
</reference>
<reference key="5">
    <citation type="journal article" date="2011" name="J. Biol. Chem.">
        <title>The eleven-nineteen lysine-rich leukemia gene (ELL2) influences the histone H3 protein modifications accompanying the shift to secretory immunoglobulin heavy chain mRNA production.</title>
        <authorList>
            <person name="Milcarek C."/>
            <person name="Albring M."/>
            <person name="Langer C."/>
            <person name="Park K.S."/>
        </authorList>
    </citation>
    <scope>FUNCTION</scope>
</reference>
<accession>Q3UKU1</accession>
<accession>E9QPE1</accession>
<name>ELL2_MOUSE</name>
<gene>
    <name type="primary">Ell2</name>
</gene>